<evidence type="ECO:0000255" key="1">
    <source>
        <dbReference type="HAMAP-Rule" id="MF_00537"/>
    </source>
</evidence>
<evidence type="ECO:0000305" key="2"/>
<keyword id="KW-0687">Ribonucleoprotein</keyword>
<keyword id="KW-0689">Ribosomal protein</keyword>
<keyword id="KW-0694">RNA-binding</keyword>
<keyword id="KW-0699">rRNA-binding</keyword>
<dbReference type="EMBL" id="CP000458">
    <property type="protein sequence ID" value="ABK07115.1"/>
    <property type="molecule type" value="Genomic_DNA"/>
</dbReference>
<dbReference type="RefSeq" id="WP_006482884.1">
    <property type="nucleotide sequence ID" value="NC_008542.1"/>
</dbReference>
<dbReference type="SMR" id="A0K3N8"/>
<dbReference type="GeneID" id="98107147"/>
<dbReference type="KEGG" id="bch:Bcen2424_0361"/>
<dbReference type="HOGENOM" id="CLU_139869_0_1_4"/>
<dbReference type="GO" id="GO:0005737">
    <property type="term" value="C:cytoplasm"/>
    <property type="evidence" value="ECO:0007669"/>
    <property type="project" value="UniProtKB-ARBA"/>
</dbReference>
<dbReference type="GO" id="GO:0015935">
    <property type="term" value="C:small ribosomal subunit"/>
    <property type="evidence" value="ECO:0007669"/>
    <property type="project" value="TreeGrafter"/>
</dbReference>
<dbReference type="GO" id="GO:0019843">
    <property type="term" value="F:rRNA binding"/>
    <property type="evidence" value="ECO:0007669"/>
    <property type="project" value="UniProtKB-UniRule"/>
</dbReference>
<dbReference type="GO" id="GO:0003735">
    <property type="term" value="F:structural constituent of ribosome"/>
    <property type="evidence" value="ECO:0007669"/>
    <property type="project" value="InterPro"/>
</dbReference>
<dbReference type="GO" id="GO:0006412">
    <property type="term" value="P:translation"/>
    <property type="evidence" value="ECO:0007669"/>
    <property type="project" value="UniProtKB-UniRule"/>
</dbReference>
<dbReference type="FunFam" id="1.10.287.1480:FF:000001">
    <property type="entry name" value="30S ribosomal protein S14"/>
    <property type="match status" value="1"/>
</dbReference>
<dbReference type="Gene3D" id="1.10.287.1480">
    <property type="match status" value="1"/>
</dbReference>
<dbReference type="HAMAP" id="MF_00537">
    <property type="entry name" value="Ribosomal_uS14_1"/>
    <property type="match status" value="1"/>
</dbReference>
<dbReference type="InterPro" id="IPR001209">
    <property type="entry name" value="Ribosomal_uS14"/>
</dbReference>
<dbReference type="InterPro" id="IPR023036">
    <property type="entry name" value="Ribosomal_uS14_bac/plastid"/>
</dbReference>
<dbReference type="NCBIfam" id="NF006477">
    <property type="entry name" value="PRK08881.1"/>
    <property type="match status" value="1"/>
</dbReference>
<dbReference type="PANTHER" id="PTHR19836">
    <property type="entry name" value="30S RIBOSOMAL PROTEIN S14"/>
    <property type="match status" value="1"/>
</dbReference>
<dbReference type="PANTHER" id="PTHR19836:SF19">
    <property type="entry name" value="SMALL RIBOSOMAL SUBUNIT PROTEIN US14M"/>
    <property type="match status" value="1"/>
</dbReference>
<dbReference type="Pfam" id="PF00253">
    <property type="entry name" value="Ribosomal_S14"/>
    <property type="match status" value="1"/>
</dbReference>
<dbReference type="SUPFAM" id="SSF57716">
    <property type="entry name" value="Glucocorticoid receptor-like (DNA-binding domain)"/>
    <property type="match status" value="1"/>
</dbReference>
<feature type="chain" id="PRO_1000128329" description="Small ribosomal subunit protein uS14">
    <location>
        <begin position="1"/>
        <end position="101"/>
    </location>
</feature>
<comment type="function">
    <text evidence="1">Binds 16S rRNA, required for the assembly of 30S particles and may also be responsible for determining the conformation of the 16S rRNA at the A site.</text>
</comment>
<comment type="subunit">
    <text evidence="1">Part of the 30S ribosomal subunit. Contacts proteins S3 and S10.</text>
</comment>
<comment type="similarity">
    <text evidence="1">Belongs to the universal ribosomal protein uS14 family.</text>
</comment>
<sequence length="101" mass="11706">MAKLALIEREKKRARLVAKFAAKREALKAIVEDQSKSEEERYEARLELQQLPRNANPTRQRNRCAITGRPRGTFRKFGLARNKIREIAFRGEIPGLTKASW</sequence>
<gene>
    <name evidence="1" type="primary">rpsN</name>
    <name type="ordered locus">Bcen2424_0361</name>
</gene>
<proteinExistence type="inferred from homology"/>
<protein>
    <recommendedName>
        <fullName evidence="1">Small ribosomal subunit protein uS14</fullName>
    </recommendedName>
    <alternativeName>
        <fullName evidence="2">30S ribosomal protein S14</fullName>
    </alternativeName>
</protein>
<name>RS14_BURCH</name>
<accession>A0K3N8</accession>
<organism>
    <name type="scientific">Burkholderia cenocepacia (strain HI2424)</name>
    <dbReference type="NCBI Taxonomy" id="331272"/>
    <lineage>
        <taxon>Bacteria</taxon>
        <taxon>Pseudomonadati</taxon>
        <taxon>Pseudomonadota</taxon>
        <taxon>Betaproteobacteria</taxon>
        <taxon>Burkholderiales</taxon>
        <taxon>Burkholderiaceae</taxon>
        <taxon>Burkholderia</taxon>
        <taxon>Burkholderia cepacia complex</taxon>
    </lineage>
</organism>
<reference key="1">
    <citation type="submission" date="2006-08" db="EMBL/GenBank/DDBJ databases">
        <title>Complete sequence of chromosome 1 of Burkholderia cenocepacia HI2424.</title>
        <authorList>
            <person name="Copeland A."/>
            <person name="Lucas S."/>
            <person name="Lapidus A."/>
            <person name="Barry K."/>
            <person name="Detter J.C."/>
            <person name="Glavina del Rio T."/>
            <person name="Hammon N."/>
            <person name="Israni S."/>
            <person name="Pitluck S."/>
            <person name="Chain P."/>
            <person name="Malfatti S."/>
            <person name="Shin M."/>
            <person name="Vergez L."/>
            <person name="Schmutz J."/>
            <person name="Larimer F."/>
            <person name="Land M."/>
            <person name="Hauser L."/>
            <person name="Kyrpides N."/>
            <person name="Kim E."/>
            <person name="LiPuma J.J."/>
            <person name="Gonzalez C.F."/>
            <person name="Konstantinidis K."/>
            <person name="Tiedje J.M."/>
            <person name="Richardson P."/>
        </authorList>
    </citation>
    <scope>NUCLEOTIDE SEQUENCE [LARGE SCALE GENOMIC DNA]</scope>
    <source>
        <strain>HI2424</strain>
    </source>
</reference>